<dbReference type="EC" id="2.4.1.227" evidence="1"/>
<dbReference type="EMBL" id="CP000937">
    <property type="protein sequence ID" value="ABZ86335.1"/>
    <property type="molecule type" value="Genomic_DNA"/>
</dbReference>
<dbReference type="SMR" id="B0TY93"/>
<dbReference type="CAZy" id="GT28">
    <property type="family name" value="Glycosyltransferase Family 28"/>
</dbReference>
<dbReference type="KEGG" id="fph:Fphi_0114"/>
<dbReference type="eggNOG" id="COG0707">
    <property type="taxonomic scope" value="Bacteria"/>
</dbReference>
<dbReference type="HOGENOM" id="CLU_037404_2_1_6"/>
<dbReference type="UniPathway" id="UPA00219"/>
<dbReference type="GO" id="GO:0005886">
    <property type="term" value="C:plasma membrane"/>
    <property type="evidence" value="ECO:0007669"/>
    <property type="project" value="UniProtKB-SubCell"/>
</dbReference>
<dbReference type="GO" id="GO:0051991">
    <property type="term" value="F:UDP-N-acetyl-D-glucosamine:N-acetylmuramoyl-L-alanyl-D-glutamyl-meso-2,6-diaminopimelyl-D-alanyl-D-alanine-diphosphoundecaprenol 4-beta-N-acetylglucosaminlytransferase activity"/>
    <property type="evidence" value="ECO:0007669"/>
    <property type="project" value="RHEA"/>
</dbReference>
<dbReference type="GO" id="GO:0050511">
    <property type="term" value="F:undecaprenyldiphospho-muramoylpentapeptide beta-N-acetylglucosaminyltransferase activity"/>
    <property type="evidence" value="ECO:0007669"/>
    <property type="project" value="UniProtKB-UniRule"/>
</dbReference>
<dbReference type="GO" id="GO:0005975">
    <property type="term" value="P:carbohydrate metabolic process"/>
    <property type="evidence" value="ECO:0007669"/>
    <property type="project" value="InterPro"/>
</dbReference>
<dbReference type="GO" id="GO:0051301">
    <property type="term" value="P:cell division"/>
    <property type="evidence" value="ECO:0007669"/>
    <property type="project" value="UniProtKB-KW"/>
</dbReference>
<dbReference type="GO" id="GO:0071555">
    <property type="term" value="P:cell wall organization"/>
    <property type="evidence" value="ECO:0007669"/>
    <property type="project" value="UniProtKB-KW"/>
</dbReference>
<dbReference type="GO" id="GO:0030259">
    <property type="term" value="P:lipid glycosylation"/>
    <property type="evidence" value="ECO:0007669"/>
    <property type="project" value="UniProtKB-UniRule"/>
</dbReference>
<dbReference type="GO" id="GO:0009252">
    <property type="term" value="P:peptidoglycan biosynthetic process"/>
    <property type="evidence" value="ECO:0007669"/>
    <property type="project" value="UniProtKB-UniRule"/>
</dbReference>
<dbReference type="GO" id="GO:0008360">
    <property type="term" value="P:regulation of cell shape"/>
    <property type="evidence" value="ECO:0007669"/>
    <property type="project" value="UniProtKB-KW"/>
</dbReference>
<dbReference type="CDD" id="cd03785">
    <property type="entry name" value="GT28_MurG"/>
    <property type="match status" value="1"/>
</dbReference>
<dbReference type="Gene3D" id="3.40.50.2000">
    <property type="entry name" value="Glycogen Phosphorylase B"/>
    <property type="match status" value="2"/>
</dbReference>
<dbReference type="HAMAP" id="MF_00033">
    <property type="entry name" value="MurG"/>
    <property type="match status" value="1"/>
</dbReference>
<dbReference type="InterPro" id="IPR006009">
    <property type="entry name" value="GlcNAc_MurG"/>
</dbReference>
<dbReference type="InterPro" id="IPR007235">
    <property type="entry name" value="Glyco_trans_28_C"/>
</dbReference>
<dbReference type="InterPro" id="IPR004276">
    <property type="entry name" value="GlycoTrans_28_N"/>
</dbReference>
<dbReference type="NCBIfam" id="TIGR01133">
    <property type="entry name" value="murG"/>
    <property type="match status" value="1"/>
</dbReference>
<dbReference type="PANTHER" id="PTHR21015:SF22">
    <property type="entry name" value="GLYCOSYLTRANSFERASE"/>
    <property type="match status" value="1"/>
</dbReference>
<dbReference type="PANTHER" id="PTHR21015">
    <property type="entry name" value="UDP-N-ACETYLGLUCOSAMINE--N-ACETYLMURAMYL-(PENTAPEPTIDE) PYROPHOSPHORYL-UNDECAPRENOL N-ACETYLGLUCOSAMINE TRANSFERASE 1"/>
    <property type="match status" value="1"/>
</dbReference>
<dbReference type="Pfam" id="PF04101">
    <property type="entry name" value="Glyco_tran_28_C"/>
    <property type="match status" value="1"/>
</dbReference>
<dbReference type="Pfam" id="PF03033">
    <property type="entry name" value="Glyco_transf_28"/>
    <property type="match status" value="1"/>
</dbReference>
<dbReference type="SUPFAM" id="SSF53756">
    <property type="entry name" value="UDP-Glycosyltransferase/glycogen phosphorylase"/>
    <property type="match status" value="1"/>
</dbReference>
<reference key="1">
    <citation type="submission" date="2007-12" db="EMBL/GenBank/DDBJ databases">
        <title>Complete sequence of chromosome of Francisella philomiragia subsp. philomiragia ATCC 25017.</title>
        <authorList>
            <consortium name="US DOE Joint Genome Institute"/>
            <person name="Copeland A."/>
            <person name="Lucas S."/>
            <person name="Lapidus A."/>
            <person name="Barry K."/>
            <person name="Detter J.C."/>
            <person name="Glavina del Rio T."/>
            <person name="Hammon N."/>
            <person name="Israni S."/>
            <person name="Dalin E."/>
            <person name="Tice H."/>
            <person name="Pitluck S."/>
            <person name="Chain P."/>
            <person name="Malfatti S."/>
            <person name="Shin M."/>
            <person name="Vergez L."/>
            <person name="Schmutz J."/>
            <person name="Larimer F."/>
            <person name="Land M."/>
            <person name="Hauser L."/>
            <person name="Richardson P."/>
        </authorList>
    </citation>
    <scope>NUCLEOTIDE SEQUENCE [LARGE SCALE GENOMIC DNA]</scope>
    <source>
        <strain>ATCC 25017 / CCUG 19701 / FSC 153 / O#319-036</strain>
    </source>
</reference>
<name>MURG_FRAP2</name>
<organism>
    <name type="scientific">Francisella philomiragia subsp. philomiragia (strain ATCC 25017 / CCUG 19701 / FSC 153 / O#319-036)</name>
    <dbReference type="NCBI Taxonomy" id="484022"/>
    <lineage>
        <taxon>Bacteria</taxon>
        <taxon>Pseudomonadati</taxon>
        <taxon>Pseudomonadota</taxon>
        <taxon>Gammaproteobacteria</taxon>
        <taxon>Thiotrichales</taxon>
        <taxon>Francisellaceae</taxon>
        <taxon>Francisella</taxon>
    </lineage>
</organism>
<feature type="chain" id="PRO_1000074459" description="UDP-N-acetylglucosamine--N-acetylmuramyl-(pentapeptide) pyrophosphoryl-undecaprenol N-acetylglucosamine transferase">
    <location>
        <begin position="1"/>
        <end position="371"/>
    </location>
</feature>
<feature type="binding site" evidence="1">
    <location>
        <begin position="15"/>
        <end position="17"/>
    </location>
    <ligand>
        <name>UDP-N-acetyl-alpha-D-glucosamine</name>
        <dbReference type="ChEBI" id="CHEBI:57705"/>
    </ligand>
</feature>
<feature type="binding site" evidence="1">
    <location>
        <position position="126"/>
    </location>
    <ligand>
        <name>UDP-N-acetyl-alpha-D-glucosamine</name>
        <dbReference type="ChEBI" id="CHEBI:57705"/>
    </ligand>
</feature>
<feature type="binding site" evidence="1">
    <location>
        <position position="172"/>
    </location>
    <ligand>
        <name>UDP-N-acetyl-alpha-D-glucosamine</name>
        <dbReference type="ChEBI" id="CHEBI:57705"/>
    </ligand>
</feature>
<feature type="binding site" evidence="1">
    <location>
        <position position="199"/>
    </location>
    <ligand>
        <name>UDP-N-acetyl-alpha-D-glucosamine</name>
        <dbReference type="ChEBI" id="CHEBI:57705"/>
    </ligand>
</feature>
<feature type="binding site" evidence="1">
    <location>
        <position position="256"/>
    </location>
    <ligand>
        <name>UDP-N-acetyl-alpha-D-glucosamine</name>
        <dbReference type="ChEBI" id="CHEBI:57705"/>
    </ligand>
</feature>
<feature type="binding site" evidence="1">
    <location>
        <begin position="275"/>
        <end position="280"/>
    </location>
    <ligand>
        <name>UDP-N-acetyl-alpha-D-glucosamine</name>
        <dbReference type="ChEBI" id="CHEBI:57705"/>
    </ligand>
</feature>
<feature type="binding site" evidence="1">
    <location>
        <position position="301"/>
    </location>
    <ligand>
        <name>UDP-N-acetyl-alpha-D-glucosamine</name>
        <dbReference type="ChEBI" id="CHEBI:57705"/>
    </ligand>
</feature>
<comment type="function">
    <text evidence="1">Cell wall formation. Catalyzes the transfer of a GlcNAc subunit on undecaprenyl-pyrophosphoryl-MurNAc-pentapeptide (lipid intermediate I) to form undecaprenyl-pyrophosphoryl-MurNAc-(pentapeptide)GlcNAc (lipid intermediate II).</text>
</comment>
<comment type="catalytic activity">
    <reaction evidence="1">
        <text>di-trans,octa-cis-undecaprenyl diphospho-N-acetyl-alpha-D-muramoyl-L-alanyl-D-glutamyl-meso-2,6-diaminopimeloyl-D-alanyl-D-alanine + UDP-N-acetyl-alpha-D-glucosamine = di-trans,octa-cis-undecaprenyl diphospho-[N-acetyl-alpha-D-glucosaminyl-(1-&gt;4)]-N-acetyl-alpha-D-muramoyl-L-alanyl-D-glutamyl-meso-2,6-diaminopimeloyl-D-alanyl-D-alanine + UDP + H(+)</text>
        <dbReference type="Rhea" id="RHEA:31227"/>
        <dbReference type="ChEBI" id="CHEBI:15378"/>
        <dbReference type="ChEBI" id="CHEBI:57705"/>
        <dbReference type="ChEBI" id="CHEBI:58223"/>
        <dbReference type="ChEBI" id="CHEBI:61387"/>
        <dbReference type="ChEBI" id="CHEBI:61388"/>
        <dbReference type="EC" id="2.4.1.227"/>
    </reaction>
</comment>
<comment type="pathway">
    <text evidence="1">Cell wall biogenesis; peptidoglycan biosynthesis.</text>
</comment>
<comment type="subcellular location">
    <subcellularLocation>
        <location evidence="1">Cell inner membrane</location>
        <topology evidence="1">Peripheral membrane protein</topology>
        <orientation evidence="1">Cytoplasmic side</orientation>
    </subcellularLocation>
</comment>
<comment type="similarity">
    <text evidence="1">Belongs to the glycosyltransferase 28 family. MurG subfamily.</text>
</comment>
<sequence length="371" mass="40929">MNLKDKNIIITAGGTGGHIYPALAVAEMLRENNANVTWVGTPNSMEANIVPEYFNMQYIKSSGVRGKGLKRKVAFPFTLISSTLKARKILKKLKIDLVIGFGGYVSGPICLAAVQKDIPIIIHEQNAKIGLTNRILAKLATKVCLAFDVEDIQKRLSPKQLAKTQVVGNPIRKDIIALNNKTKNITENGKLKLLVLGGSQGAKSINNIIPDLIIEANKQGISLKVWHQTGKLSFEETKNNYNQVPSTHIKDISAYITDMTNAYEWADILICRAGALTVSESAIAGVPAIFIPLPSAVDDHQFFNAQNMVKNNAGFCIRQDQMTLENLIDIIKPLYEDRDKLKEISQKAKNTLIKDSSEQILKAVEQILNKK</sequence>
<gene>
    <name evidence="1" type="primary">murG</name>
    <name type="ordered locus">Fphi_0114</name>
</gene>
<evidence type="ECO:0000255" key="1">
    <source>
        <dbReference type="HAMAP-Rule" id="MF_00033"/>
    </source>
</evidence>
<accession>B0TY93</accession>
<protein>
    <recommendedName>
        <fullName evidence="1">UDP-N-acetylglucosamine--N-acetylmuramyl-(pentapeptide) pyrophosphoryl-undecaprenol N-acetylglucosamine transferase</fullName>
        <ecNumber evidence="1">2.4.1.227</ecNumber>
    </recommendedName>
    <alternativeName>
        <fullName evidence="1">Undecaprenyl-PP-MurNAc-pentapeptide-UDPGlcNAc GlcNAc transferase</fullName>
    </alternativeName>
</protein>
<proteinExistence type="inferred from homology"/>
<keyword id="KW-0131">Cell cycle</keyword>
<keyword id="KW-0132">Cell division</keyword>
<keyword id="KW-0997">Cell inner membrane</keyword>
<keyword id="KW-1003">Cell membrane</keyword>
<keyword id="KW-0133">Cell shape</keyword>
<keyword id="KW-0961">Cell wall biogenesis/degradation</keyword>
<keyword id="KW-0328">Glycosyltransferase</keyword>
<keyword id="KW-0472">Membrane</keyword>
<keyword id="KW-0573">Peptidoglycan synthesis</keyword>
<keyword id="KW-0808">Transferase</keyword>